<sequence>MGIAKQSCDCCRVRRVKCDRNKPCNRCIQRNLNCTYLQPLKKRGPKSIRAGSLKKIAEVQMVSMNNNIMAAPVVCKKVPKNLIDQCLRLRLYHDNLYVIWPMLSYDDLHKLLEEKYDDRCAYWFLVSLSAATLSDLQIEIEYEEGVTFTGEQLCTLCMLSRQFFDDLSNSDIFRIMTYYCLHRCYAQFADTRTSYRLSCEAVGLIIKIAGFHREETYEFLPFGEQQLRRKVYYLLLMTERFYAVYIKCVTSLDATIAPPLPEVVTDPRLSLESFLEVIRVFTIPGKCFYDALATNCVDDSCTEDSLKRIRNELHTTSLDIEPWSYGYIDFLFSRHWVRTLAWKLVLHMKGMRMNFLSNTNNTHIPVEIARDMLGDTFLTPKNLYDVHGPGIPMKALEIANALVDVVNKYDHNMKLEAWNVLYDVSKFVFSLKHCNNKMFDRFSTKCQGALITLPISKPLQLNDNSKDEDDIIP</sequence>
<dbReference type="EMBL" id="X12576">
    <property type="protein sequence ID" value="CAA31088.1"/>
    <property type="molecule type" value="Genomic_DNA"/>
</dbReference>
<dbReference type="EMBL" id="M36537">
    <property type="protein sequence ID" value="AAA34755.1"/>
    <property type="molecule type" value="Genomic_DNA"/>
</dbReference>
<dbReference type="PIR" id="S03814">
    <property type="entry name" value="RGBYM3"/>
</dbReference>
<dbReference type="SGD" id="S000029659">
    <property type="gene designation" value="MAL63"/>
</dbReference>
<dbReference type="VEuPathDB" id="FungiDB:YPR196W"/>
<dbReference type="GO" id="GO:0005634">
    <property type="term" value="C:nucleus"/>
    <property type="evidence" value="ECO:0000314"/>
    <property type="project" value="SGD"/>
</dbReference>
<dbReference type="GO" id="GO:0003700">
    <property type="term" value="F:DNA-binding transcription factor activity"/>
    <property type="evidence" value="ECO:0000315"/>
    <property type="project" value="SGD"/>
</dbReference>
<dbReference type="GO" id="GO:0000981">
    <property type="term" value="F:DNA-binding transcription factor activity, RNA polymerase II-specific"/>
    <property type="evidence" value="ECO:0007669"/>
    <property type="project" value="InterPro"/>
</dbReference>
<dbReference type="GO" id="GO:0043565">
    <property type="term" value="F:sequence-specific DNA binding"/>
    <property type="evidence" value="ECO:0007005"/>
    <property type="project" value="SGD"/>
</dbReference>
<dbReference type="GO" id="GO:0008270">
    <property type="term" value="F:zinc ion binding"/>
    <property type="evidence" value="ECO:0007669"/>
    <property type="project" value="InterPro"/>
</dbReference>
<dbReference type="GO" id="GO:0000023">
    <property type="term" value="P:maltose metabolic process"/>
    <property type="evidence" value="ECO:0007669"/>
    <property type="project" value="UniProtKB-KW"/>
</dbReference>
<dbReference type="GO" id="GO:0006355">
    <property type="term" value="P:regulation of DNA-templated transcription"/>
    <property type="evidence" value="ECO:0000314"/>
    <property type="project" value="SGD"/>
</dbReference>
<dbReference type="CDD" id="cd12148">
    <property type="entry name" value="fungal_TF_MHR"/>
    <property type="match status" value="1"/>
</dbReference>
<dbReference type="CDD" id="cd00067">
    <property type="entry name" value="GAL4"/>
    <property type="match status" value="1"/>
</dbReference>
<dbReference type="FunFam" id="4.10.240.10:FF:000020">
    <property type="entry name" value="Maltose activator protein"/>
    <property type="match status" value="1"/>
</dbReference>
<dbReference type="Gene3D" id="4.10.240.10">
    <property type="entry name" value="Zn(2)-C6 fungal-type DNA-binding domain"/>
    <property type="match status" value="1"/>
</dbReference>
<dbReference type="InterPro" id="IPR050797">
    <property type="entry name" value="Carb_Metab_Trans_Reg"/>
</dbReference>
<dbReference type="InterPro" id="IPR020448">
    <property type="entry name" value="Maltose_ferment_reg_DNA-bd"/>
</dbReference>
<dbReference type="InterPro" id="IPR036864">
    <property type="entry name" value="Zn2-C6_fun-type_DNA-bd_sf"/>
</dbReference>
<dbReference type="InterPro" id="IPR001138">
    <property type="entry name" value="Zn2Cys6_DnaBD"/>
</dbReference>
<dbReference type="PANTHER" id="PTHR31668">
    <property type="entry name" value="GLUCOSE TRANSPORT TRANSCRIPTION REGULATOR RGT1-RELATED-RELATED"/>
    <property type="match status" value="1"/>
</dbReference>
<dbReference type="PANTHER" id="PTHR31668:SF18">
    <property type="entry name" value="MALTOSE FERMENTATION REGULATORY PROTEIN MAL13-RELATED"/>
    <property type="match status" value="1"/>
</dbReference>
<dbReference type="Pfam" id="PF00172">
    <property type="entry name" value="Zn_clus"/>
    <property type="match status" value="1"/>
</dbReference>
<dbReference type="PRINTS" id="PR00054">
    <property type="entry name" value="FUNGALZNCYS"/>
</dbReference>
<dbReference type="SMART" id="SM00066">
    <property type="entry name" value="GAL4"/>
    <property type="match status" value="1"/>
</dbReference>
<dbReference type="SUPFAM" id="SSF57701">
    <property type="entry name" value="Zn2/Cys6 DNA-binding domain"/>
    <property type="match status" value="1"/>
</dbReference>
<dbReference type="PROSITE" id="PS00463">
    <property type="entry name" value="ZN2_CY6_FUNGAL_1"/>
    <property type="match status" value="1"/>
</dbReference>
<dbReference type="PROSITE" id="PS50048">
    <property type="entry name" value="ZN2_CY6_FUNGAL_2"/>
    <property type="match status" value="1"/>
</dbReference>
<feature type="chain" id="PRO_0000114958" description="Maltose fermentation regulatory protein MAL63">
    <location>
        <begin position="1"/>
        <end position="473"/>
    </location>
</feature>
<feature type="DNA-binding region" description="Zn(2)-C6 fungal-type" evidence="2">
    <location>
        <begin position="8"/>
        <end position="34"/>
    </location>
</feature>
<feature type="short sequence motif" description="Nuclear localization signal" evidence="1">
    <location>
        <begin position="41"/>
        <end position="49"/>
    </location>
</feature>
<feature type="sequence conflict" description="In Ref. 2; AAA34755." evidence="3" ref="2">
    <location>
        <begin position="90"/>
        <end position="91"/>
    </location>
</feature>
<feature type="sequence conflict" description="In Ref. 2; AAA34755." evidence="3" ref="2">
    <location>
        <position position="206"/>
    </location>
</feature>
<keyword id="KW-0010">Activator</keyword>
<keyword id="KW-0238">DNA-binding</keyword>
<keyword id="KW-0462">Maltose metabolism</keyword>
<keyword id="KW-0479">Metal-binding</keyword>
<keyword id="KW-0539">Nucleus</keyword>
<keyword id="KW-0804">Transcription</keyword>
<keyword id="KW-0805">Transcription regulation</keyword>
<keyword id="KW-0862">Zinc</keyword>
<organism>
    <name type="scientific">Saccharomyces cerevisiae</name>
    <name type="common">Baker's yeast</name>
    <dbReference type="NCBI Taxonomy" id="4932"/>
    <lineage>
        <taxon>Eukaryota</taxon>
        <taxon>Fungi</taxon>
        <taxon>Dikarya</taxon>
        <taxon>Ascomycota</taxon>
        <taxon>Saccharomycotina</taxon>
        <taxon>Saccharomycetes</taxon>
        <taxon>Saccharomycetales</taxon>
        <taxon>Saccharomycetaceae</taxon>
        <taxon>Saccharomyces</taxon>
    </lineage>
</organism>
<gene>
    <name type="primary">MAL63</name>
    <name type="synonym">MAL6R</name>
</gene>
<name>MAL63_YEASX</name>
<protein>
    <recommendedName>
        <fullName>Maltose fermentation regulatory protein MAL63</fullName>
    </recommendedName>
</protein>
<comment type="function">
    <text>Regulates the coordinate transcription of structural MAL6S (maltase) and MAL6T (maltose permease) genes.</text>
</comment>
<comment type="subcellular location">
    <subcellularLocation>
        <location>Nucleus</location>
    </subcellularLocation>
</comment>
<comment type="similarity">
    <text evidence="3">Belongs to the MAL13 family.</text>
</comment>
<evidence type="ECO:0000255" key="1"/>
<evidence type="ECO:0000255" key="2">
    <source>
        <dbReference type="PROSITE-ProRule" id="PRU00227"/>
    </source>
</evidence>
<evidence type="ECO:0000305" key="3"/>
<proteinExistence type="inferred from homology"/>
<reference key="1">
    <citation type="journal article" date="1988" name="Mol. Gen. Genet.">
        <title>Primary structure of the regulatory gene from the MAL6 locus of Saccharomyces carlsbergensis.</title>
        <authorList>
            <person name="Sollitti P."/>
            <person name="Marmur J."/>
        </authorList>
    </citation>
    <scope>NUCLEOTIDE SEQUENCE [GENOMIC DNA]</scope>
    <source>
        <strain>Carlsbergensis / JM1901</strain>
    </source>
</reference>
<reference key="2">
    <citation type="journal article" date="1988" name="Curr. Genet.">
        <title>The MAL63 gene of Saccharomyces encodes a cysteine-zinc finger protein.</title>
        <authorList>
            <person name="Kim J."/>
            <person name="Michels C.A."/>
        </authorList>
    </citation>
    <scope>NUCLEOTIDE SEQUENCE [GENOMIC DNA]</scope>
</reference>
<accession>P10508</accession>